<feature type="chain" id="PRO_0000189985" description="Dedicator of cytokinesis protein 1">
    <location>
        <begin position="1"/>
        <end position="1865"/>
    </location>
</feature>
<feature type="domain" description="SH3" evidence="4">
    <location>
        <begin position="9"/>
        <end position="70"/>
    </location>
</feature>
<feature type="domain" description="C2 DOCK-type" evidence="5">
    <location>
        <begin position="425"/>
        <end position="609"/>
    </location>
</feature>
<feature type="domain" description="DOCKER" evidence="6">
    <location>
        <begin position="1207"/>
        <end position="1617"/>
    </location>
</feature>
<feature type="region of interest" description="Disordered" evidence="7">
    <location>
        <begin position="1613"/>
        <end position="1723"/>
    </location>
</feature>
<feature type="region of interest" description="Phosphoinositide-binding" evidence="3">
    <location>
        <begin position="1687"/>
        <end position="1695"/>
    </location>
</feature>
<feature type="region of interest" description="Disordered" evidence="7">
    <location>
        <begin position="1753"/>
        <end position="1778"/>
    </location>
</feature>
<feature type="region of interest" description="Interaction with NCK2 second and third SH3 domain (minor)" evidence="1">
    <location>
        <begin position="1793"/>
        <end position="1819"/>
    </location>
</feature>
<feature type="region of interest" description="Disordered" evidence="7">
    <location>
        <begin position="1801"/>
        <end position="1865"/>
    </location>
</feature>
<feature type="region of interest" description="Interaction with NCK2 third SH3 domain (major)" evidence="1">
    <location>
        <begin position="1820"/>
        <end position="1836"/>
    </location>
</feature>
<feature type="region of interest" description="Interaction with NCK2 (minor)" evidence="1">
    <location>
        <begin position="1837"/>
        <end position="1852"/>
    </location>
</feature>
<feature type="short sequence motif" description="SH3-binding; interaction with CRK" evidence="3">
    <location>
        <begin position="1799"/>
        <end position="1805"/>
    </location>
</feature>
<feature type="short sequence motif" description="SH3-binding; interaction with CRK" evidence="3">
    <location>
        <begin position="1838"/>
        <end position="1843"/>
    </location>
</feature>
<feature type="compositionally biased region" description="Low complexity" evidence="7">
    <location>
        <begin position="1639"/>
        <end position="1664"/>
    </location>
</feature>
<feature type="compositionally biased region" description="Basic and acidic residues" evidence="7">
    <location>
        <begin position="1680"/>
        <end position="1694"/>
    </location>
</feature>
<feature type="compositionally biased region" description="Basic residues" evidence="7">
    <location>
        <begin position="1695"/>
        <end position="1704"/>
    </location>
</feature>
<feature type="compositionally biased region" description="Basic and acidic residues" evidence="7">
    <location>
        <begin position="1705"/>
        <end position="1716"/>
    </location>
</feature>
<feature type="compositionally biased region" description="Low complexity" evidence="7">
    <location>
        <begin position="1756"/>
        <end position="1766"/>
    </location>
</feature>
<feature type="compositionally biased region" description="Pro residues" evidence="7">
    <location>
        <begin position="1825"/>
        <end position="1851"/>
    </location>
</feature>
<feature type="modified residue" description="Phosphoserine" evidence="2">
    <location>
        <position position="1681"/>
    </location>
</feature>
<feature type="modified residue" description="Phosphoserine" evidence="12">
    <location>
        <position position="1743"/>
    </location>
</feature>
<feature type="modified residue" description="Phosphoserine" evidence="12">
    <location>
        <position position="1756"/>
    </location>
</feature>
<feature type="modified residue" description="Phosphoserine" evidence="12">
    <location>
        <position position="1761"/>
    </location>
</feature>
<feature type="modified residue" description="Phosphoserine" evidence="12">
    <location>
        <position position="1764"/>
    </location>
</feature>
<feature type="modified residue" description="Phosphothreonine" evidence="12">
    <location>
        <position position="1767"/>
    </location>
</feature>
<feature type="modified residue" description="Phosphothreonine" evidence="12">
    <location>
        <position position="1772"/>
    </location>
</feature>
<feature type="modified residue" description="Phosphoserine" evidence="12">
    <location>
        <position position="1858"/>
    </location>
</feature>
<feature type="splice variant" id="VSP_022205" description="In isoform 2." evidence="10">
    <original>I</original>
    <variation>V</variation>
    <location>
        <position position="1572"/>
    </location>
</feature>
<feature type="splice variant" id="VSP_022206" description="In isoform 2." evidence="10">
    <location>
        <begin position="1573"/>
        <end position="1865"/>
    </location>
</feature>
<feature type="sequence conflict" description="In Ref. 1; BAE22333." evidence="11" ref="1">
    <original>I</original>
    <variation>V</variation>
    <location>
        <position position="1358"/>
    </location>
</feature>
<feature type="strand" evidence="13">
    <location>
        <begin position="14"/>
        <end position="16"/>
    </location>
</feature>
<feature type="strand" evidence="13">
    <location>
        <begin position="18"/>
        <end position="20"/>
    </location>
</feature>
<feature type="strand" evidence="13">
    <location>
        <begin position="24"/>
        <end position="27"/>
    </location>
</feature>
<feature type="strand" evidence="13">
    <location>
        <begin position="34"/>
        <end position="44"/>
    </location>
</feature>
<feature type="strand" evidence="13">
    <location>
        <begin position="46"/>
        <end position="52"/>
    </location>
</feature>
<feature type="strand" evidence="13">
    <location>
        <begin position="58"/>
        <end position="60"/>
    </location>
</feature>
<feature type="helix" evidence="13">
    <location>
        <begin position="62"/>
        <end position="64"/>
    </location>
</feature>
<feature type="strand" evidence="13">
    <location>
        <begin position="65"/>
        <end position="67"/>
    </location>
</feature>
<accession>Q8BUR4</accession>
<accession>Q3URT8</accession>
<accession>Q3UY80</accession>
<accession>Q4QQL8</accession>
<accession>Q6PD14</accession>
<accession>Q8BVC9</accession>
<accession>Q91Z55</accession>
<accession>Q922V1</accession>
<protein>
    <recommendedName>
        <fullName>Dedicator of cytokinesis protein 1</fullName>
    </recommendedName>
    <alternativeName>
        <fullName>180 kDa protein downstream of CRK</fullName>
        <shortName>DOCK180</shortName>
    </alternativeName>
</protein>
<sequence length="1865" mass="215085">MTRWVPTKREEKYGVAFYNYDARGADELSLQIGDTVHILETYEGWYRGYTLRKKSKKGIFPASYIHLKEAIVEGKGQHETVIPGDLPLIQEVTTTLREWSTIWRQLYVQDNREMFRSVRHMIYDLIEWRSQILSGTLPQDELKELKKKVTAKIDYGNRILDLDLVVRDEDGNILDPELTSTISLFRAHEVASKQVEERLQEEKSQKQNMDINRQAKFAATPSLALFVNLKNVVCKIGEDAEVLMSLYDPMESKFISENYLVRWSSSGLPKDIDRLHNLRAVFTDLGSKDLKREKISFVCQIVRVGRMELRDSNTRKLTSGLRRPFGVAVMDVTDIINGKVDDEDKQHFIPFQAVAGENDFLQTVINKVIAAKEVNHKGQGLWVTLKLLPGDIHQIRKEFPHLVDRTTAVARKTGFPEIIMPGDVRNDIYVTLVQGDFDKGSKTTAKNVEVTVSVYDEDGKRLEHVIFPGAGDEAISEYKSVIYYQVKQPRWFETLKVAIPIEDVNRSHLRFTFRHRSSQDSKDKSEKIFALAFVKLMRYDGTTLRDGEHDLIVYKAEAKKLEDAATYLSLPSTKGELEEKGHSATGKGMQSLGSCTISKDSFQISTLVCSTKLTQNVDLLGLLKWRSNTNLLQQNLRQLMKVDGGEVVKFLQDTLDALFNIMMENSESETFDTLVFDALVFIIGLIADRKFQHFNPVLETYIKKHFSATLAYTKLTKVLRTYVASAEKPGVNEQLYKAIKALEYIFKFIVRSRVLFNQLYENKGEADFVESLLQLFRSINDMMSSLSELTVRVKGAALKYLPTIVNDVKLVFDPKELSKMFTEFILNVPAGLLTVQKLSCLIEIVHSDLFTQHDCREILLPMMTDQLKYHLERQEELEACCQLLSNILEVLYRKDVGPTQRHVQIIMETLLRTVNRTVISMGRDSELIGNFVACMTAILRQMEDYHYAHLIKTFGKMRTDVVDFLMETFIMFKNLIGKNVYPFDWVIMNTMQNKVFLRAINQYADMLNKRFLDQANFELQLWNNYFHLAVAFLTQESLQLENFSSAKRAKILNKYGDMRRQIGFEIRDMWYNLGQHKIKFIPEMVGPILEMTLIPETELRKATLPIFFDMMQCEFHSTRSFQMFENEIITKLDHEVEGGRGDEQYKVLFDKILLEHCRKHKYLAKTGETFVKLVVRLMERLLDYRTIMHDENKDNRMSCTVNVLNFYKEIEREEMYIRYLYKLCDLHKECDNYTEAAYTLLLHAKLLKWSEDVCAAHLTQRDGFQATTQGQLKEQLYQEIIHYFDKGKMWEEAIALGKELAEQYETEMFDYEQLSELLKKQAQFYENIVKVIRPKPDYFAVGYYGQGFPSFLRGKVFIYRGKEYERREDFEARLLTQFPNAEKMKTTSPPGDDIKTSPGQYIQCFTVKPKLDLPPRFHRPVSEQIVSFYRVNEVQRFEYSRPIRKGEKNPDNEFANMWIERTIYTTAYKLPGILRWFEVKSVFMVEISPLENAIETMQLTNDKISSMVQQHLDDPGLPINPLSMLLNGIVDPAVMGGFANYEKAFFTDRYLQEHPEAHGQIEKLKDLIAWQIPFLAEGIRIHGDKVTEALRPFHERMEACFKQLKEKVEKQYGVRTMPSGLDDRRGSRPRSMVRSFTMPSSSRPLSVASVSSFSSDSTPSRPGSDGFALEPLLPKKMHSRSQDKLDKDDPDKEKKDKKKEKRNSKHQEIFDKEFKPADSSLQQSEAVILSETISPLRPQRPKSQVINVIGNERRFSVSPASPSSQQTPPPVTPRAKLSFSIQPSLELNGMMGMDVADVPPPLPLKGNMADYGNLMENQDMMVSPTSPPPPPPQRQQPPPLPSKTPPPPPPKTTRKQTSVDSGIVQ</sequence>
<keyword id="KW-0002">3D-structure</keyword>
<keyword id="KW-0025">Alternative splicing</keyword>
<keyword id="KW-0053">Apoptosis</keyword>
<keyword id="KW-0963">Cytoplasm</keyword>
<keyword id="KW-0344">Guanine-nucleotide releasing factor</keyword>
<keyword id="KW-0472">Membrane</keyword>
<keyword id="KW-0581">Phagocytosis</keyword>
<keyword id="KW-0597">Phosphoprotein</keyword>
<keyword id="KW-1185">Reference proteome</keyword>
<keyword id="KW-0728">SH3 domain</keyword>
<keyword id="KW-0729">SH3-binding</keyword>
<evidence type="ECO:0000250" key="1"/>
<evidence type="ECO:0000250" key="2">
    <source>
        <dbReference type="UniProtKB" id="Q14185"/>
    </source>
</evidence>
<evidence type="ECO:0000255" key="3"/>
<evidence type="ECO:0000255" key="4">
    <source>
        <dbReference type="PROSITE-ProRule" id="PRU00192"/>
    </source>
</evidence>
<evidence type="ECO:0000255" key="5">
    <source>
        <dbReference type="PROSITE-ProRule" id="PRU00983"/>
    </source>
</evidence>
<evidence type="ECO:0000255" key="6">
    <source>
        <dbReference type="PROSITE-ProRule" id="PRU00984"/>
    </source>
</evidence>
<evidence type="ECO:0000256" key="7">
    <source>
        <dbReference type="SAM" id="MobiDB-lite"/>
    </source>
</evidence>
<evidence type="ECO:0000269" key="8">
    <source>
    </source>
</evidence>
<evidence type="ECO:0000269" key="9">
    <source>
    </source>
</evidence>
<evidence type="ECO:0000303" key="10">
    <source>
    </source>
</evidence>
<evidence type="ECO:0000305" key="11"/>
<evidence type="ECO:0007744" key="12">
    <source>
    </source>
</evidence>
<evidence type="ECO:0007829" key="13">
    <source>
        <dbReference type="PDB" id="2M0Y"/>
    </source>
</evidence>
<reference key="1">
    <citation type="journal article" date="2009" name="PLoS Biol.">
        <title>Lineage-specific biology revealed by a finished genome assembly of the mouse.</title>
        <authorList>
            <person name="Church D.M."/>
            <person name="Goodstadt L."/>
            <person name="Hillier L.W."/>
            <person name="Zody M.C."/>
            <person name="Goldstein S."/>
            <person name="She X."/>
            <person name="Bult C.J."/>
            <person name="Agarwala R."/>
            <person name="Cherry J.L."/>
            <person name="DiCuccio M."/>
            <person name="Hlavina W."/>
            <person name="Kapustin Y."/>
            <person name="Meric P."/>
            <person name="Maglott D."/>
            <person name="Birtle Z."/>
            <person name="Marques A.C."/>
            <person name="Graves T."/>
            <person name="Zhou S."/>
            <person name="Teague B."/>
            <person name="Potamousis K."/>
            <person name="Churas C."/>
            <person name="Place M."/>
            <person name="Herschleb J."/>
            <person name="Runnheim R."/>
            <person name="Forrest D."/>
            <person name="Amos-Landgraf J."/>
            <person name="Schwartz D.C."/>
            <person name="Cheng Z."/>
            <person name="Lindblad-Toh K."/>
            <person name="Eichler E.E."/>
            <person name="Ponting C.P."/>
        </authorList>
    </citation>
    <scope>NUCLEOTIDE SEQUENCE [LARGE SCALE GENOMIC DNA]</scope>
    <source>
        <strain>C57BL/6J</strain>
    </source>
</reference>
<reference key="2">
    <citation type="journal article" date="2005" name="Science">
        <title>The transcriptional landscape of the mammalian genome.</title>
        <authorList>
            <person name="Carninci P."/>
            <person name="Kasukawa T."/>
            <person name="Katayama S."/>
            <person name="Gough J."/>
            <person name="Frith M.C."/>
            <person name="Maeda N."/>
            <person name="Oyama R."/>
            <person name="Ravasi T."/>
            <person name="Lenhard B."/>
            <person name="Wells C."/>
            <person name="Kodzius R."/>
            <person name="Shimokawa K."/>
            <person name="Bajic V.B."/>
            <person name="Brenner S.E."/>
            <person name="Batalov S."/>
            <person name="Forrest A.R."/>
            <person name="Zavolan M."/>
            <person name="Davis M.J."/>
            <person name="Wilming L.G."/>
            <person name="Aidinis V."/>
            <person name="Allen J.E."/>
            <person name="Ambesi-Impiombato A."/>
            <person name="Apweiler R."/>
            <person name="Aturaliya R.N."/>
            <person name="Bailey T.L."/>
            <person name="Bansal M."/>
            <person name="Baxter L."/>
            <person name="Beisel K.W."/>
            <person name="Bersano T."/>
            <person name="Bono H."/>
            <person name="Chalk A.M."/>
            <person name="Chiu K.P."/>
            <person name="Choudhary V."/>
            <person name="Christoffels A."/>
            <person name="Clutterbuck D.R."/>
            <person name="Crowe M.L."/>
            <person name="Dalla E."/>
            <person name="Dalrymple B.P."/>
            <person name="de Bono B."/>
            <person name="Della Gatta G."/>
            <person name="di Bernardo D."/>
            <person name="Down T."/>
            <person name="Engstrom P."/>
            <person name="Fagiolini M."/>
            <person name="Faulkner G."/>
            <person name="Fletcher C.F."/>
            <person name="Fukushima T."/>
            <person name="Furuno M."/>
            <person name="Futaki S."/>
            <person name="Gariboldi M."/>
            <person name="Georgii-Hemming P."/>
            <person name="Gingeras T.R."/>
            <person name="Gojobori T."/>
            <person name="Green R.E."/>
            <person name="Gustincich S."/>
            <person name="Harbers M."/>
            <person name="Hayashi Y."/>
            <person name="Hensch T.K."/>
            <person name="Hirokawa N."/>
            <person name="Hill D."/>
            <person name="Huminiecki L."/>
            <person name="Iacono M."/>
            <person name="Ikeo K."/>
            <person name="Iwama A."/>
            <person name="Ishikawa T."/>
            <person name="Jakt M."/>
            <person name="Kanapin A."/>
            <person name="Katoh M."/>
            <person name="Kawasawa Y."/>
            <person name="Kelso J."/>
            <person name="Kitamura H."/>
            <person name="Kitano H."/>
            <person name="Kollias G."/>
            <person name="Krishnan S.P."/>
            <person name="Kruger A."/>
            <person name="Kummerfeld S.K."/>
            <person name="Kurochkin I.V."/>
            <person name="Lareau L.F."/>
            <person name="Lazarevic D."/>
            <person name="Lipovich L."/>
            <person name="Liu J."/>
            <person name="Liuni S."/>
            <person name="McWilliam S."/>
            <person name="Madan Babu M."/>
            <person name="Madera M."/>
            <person name="Marchionni L."/>
            <person name="Matsuda H."/>
            <person name="Matsuzawa S."/>
            <person name="Miki H."/>
            <person name="Mignone F."/>
            <person name="Miyake S."/>
            <person name="Morris K."/>
            <person name="Mottagui-Tabar S."/>
            <person name="Mulder N."/>
            <person name="Nakano N."/>
            <person name="Nakauchi H."/>
            <person name="Ng P."/>
            <person name="Nilsson R."/>
            <person name="Nishiguchi S."/>
            <person name="Nishikawa S."/>
            <person name="Nori F."/>
            <person name="Ohara O."/>
            <person name="Okazaki Y."/>
            <person name="Orlando V."/>
            <person name="Pang K.C."/>
            <person name="Pavan W.J."/>
            <person name="Pavesi G."/>
            <person name="Pesole G."/>
            <person name="Petrovsky N."/>
            <person name="Piazza S."/>
            <person name="Reed J."/>
            <person name="Reid J.F."/>
            <person name="Ring B.Z."/>
            <person name="Ringwald M."/>
            <person name="Rost B."/>
            <person name="Ruan Y."/>
            <person name="Salzberg S.L."/>
            <person name="Sandelin A."/>
            <person name="Schneider C."/>
            <person name="Schoenbach C."/>
            <person name="Sekiguchi K."/>
            <person name="Semple C.A."/>
            <person name="Seno S."/>
            <person name="Sessa L."/>
            <person name="Sheng Y."/>
            <person name="Shibata Y."/>
            <person name="Shimada H."/>
            <person name="Shimada K."/>
            <person name="Silva D."/>
            <person name="Sinclair B."/>
            <person name="Sperling S."/>
            <person name="Stupka E."/>
            <person name="Sugiura K."/>
            <person name="Sultana R."/>
            <person name="Takenaka Y."/>
            <person name="Taki K."/>
            <person name="Tammoja K."/>
            <person name="Tan S.L."/>
            <person name="Tang S."/>
            <person name="Taylor M.S."/>
            <person name="Tegner J."/>
            <person name="Teichmann S.A."/>
            <person name="Ueda H.R."/>
            <person name="van Nimwegen E."/>
            <person name="Verardo R."/>
            <person name="Wei C.L."/>
            <person name="Yagi K."/>
            <person name="Yamanishi H."/>
            <person name="Zabarovsky E."/>
            <person name="Zhu S."/>
            <person name="Zimmer A."/>
            <person name="Hide W."/>
            <person name="Bult C."/>
            <person name="Grimmond S.M."/>
            <person name="Teasdale R.D."/>
            <person name="Liu E.T."/>
            <person name="Brusic V."/>
            <person name="Quackenbush J."/>
            <person name="Wahlestedt C."/>
            <person name="Mattick J.S."/>
            <person name="Hume D.A."/>
            <person name="Kai C."/>
            <person name="Sasaki D."/>
            <person name="Tomaru Y."/>
            <person name="Fukuda S."/>
            <person name="Kanamori-Katayama M."/>
            <person name="Suzuki M."/>
            <person name="Aoki J."/>
            <person name="Arakawa T."/>
            <person name="Iida J."/>
            <person name="Imamura K."/>
            <person name="Itoh M."/>
            <person name="Kato T."/>
            <person name="Kawaji H."/>
            <person name="Kawagashira N."/>
            <person name="Kawashima T."/>
            <person name="Kojima M."/>
            <person name="Kondo S."/>
            <person name="Konno H."/>
            <person name="Nakano K."/>
            <person name="Ninomiya N."/>
            <person name="Nishio T."/>
            <person name="Okada M."/>
            <person name="Plessy C."/>
            <person name="Shibata K."/>
            <person name="Shiraki T."/>
            <person name="Suzuki S."/>
            <person name="Tagami M."/>
            <person name="Waki K."/>
            <person name="Watahiki A."/>
            <person name="Okamura-Oho Y."/>
            <person name="Suzuki H."/>
            <person name="Kawai J."/>
            <person name="Hayashizaki Y."/>
        </authorList>
    </citation>
    <scope>NUCLEOTIDE SEQUENCE [LARGE SCALE MRNA] OF 1-289 AND 1763-1865 (ISOFORM 1)</scope>
    <scope>NUCLEOTIDE SEQUENCE [LARGE SCALE MRNA] OF 1171-1865 (ISOFORM 2)</scope>
    <source>
        <strain>C57BL/6J</strain>
        <tissue>Olfactory bulb</tissue>
    </source>
</reference>
<reference key="3">
    <citation type="journal article" date="2004" name="Genome Res.">
        <title>The status, quality, and expansion of the NIH full-length cDNA project: the Mammalian Gene Collection (MGC).</title>
        <authorList>
            <consortium name="The MGC Project Team"/>
        </authorList>
    </citation>
    <scope>NUCLEOTIDE SEQUENCE [LARGE SCALE MRNA] OF 902-1865 (ISOFORM 1)</scope>
    <source>
        <strain>C57BL/6J</strain>
        <tissue>Brain</tissue>
        <tissue>Eye</tissue>
        <tissue>Mammary tumor</tissue>
    </source>
</reference>
<reference key="4">
    <citation type="journal article" date="1998" name="J. Biol. Chem.">
        <title>Evidence that DOCK180 up-regulates signals from the CrkII-p130(Cas) complex.</title>
        <authorList>
            <person name="Kiyokawa E."/>
            <person name="Hashimoto Y."/>
            <person name="Kurata T."/>
            <person name="Sugimura H."/>
            <person name="Matsuda M."/>
        </authorList>
    </citation>
    <scope>PHOSPHORYLATION</scope>
</reference>
<reference key="5">
    <citation type="journal article" date="2007" name="Nature">
        <title>BAI1 is an engulfment receptor for apoptotic cells upstream of the ELMO/Dock180/Rac module.</title>
        <authorList>
            <person name="Park D."/>
            <person name="Tosello-Trampont A.-C."/>
            <person name="Elliott M.R."/>
            <person name="Lu M."/>
            <person name="Haney L.B."/>
            <person name="Ma Z."/>
            <person name="Klibanov A.L."/>
            <person name="Mandell J.W."/>
            <person name="Ravichandran K.S."/>
        </authorList>
    </citation>
    <scope>INTERACTION WITH ADGRB1 AND ELMO1</scope>
</reference>
<reference key="6">
    <citation type="journal article" date="2010" name="Cell">
        <title>A tissue-specific atlas of mouse protein phosphorylation and expression.</title>
        <authorList>
            <person name="Huttlin E.L."/>
            <person name="Jedrychowski M.P."/>
            <person name="Elias J.E."/>
            <person name="Goswami T."/>
            <person name="Rad R."/>
            <person name="Beausoleil S.A."/>
            <person name="Villen J."/>
            <person name="Haas W."/>
            <person name="Sowa M.E."/>
            <person name="Gygi S.P."/>
        </authorList>
    </citation>
    <scope>PHOSPHORYLATION [LARGE SCALE ANALYSIS] AT SER-1743; SER-1756; SER-1761; SER-1764; THR-1767; THR-1772 AND SER-1858</scope>
    <scope>IDENTIFICATION BY MASS SPECTROMETRY [LARGE SCALE ANALYSIS]</scope>
    <source>
        <tissue>Brain</tissue>
        <tissue>Brown adipose tissue</tissue>
        <tissue>Heart</tissue>
        <tissue>Kidney</tissue>
        <tissue>Liver</tissue>
        <tissue>Lung</tissue>
        <tissue>Pancreas</tissue>
        <tissue>Spleen</tissue>
        <tissue>Testis</tissue>
    </source>
</reference>
<reference key="7">
    <citation type="journal article" date="2014" name="Cell Rep.">
        <title>Cytoskeletal regulation by AUTS2 in neuronal migration and neuritogenesis.</title>
        <authorList>
            <person name="Hori K."/>
            <person name="Nagai T."/>
            <person name="Shan W."/>
            <person name="Sakamoto A."/>
            <person name="Taya S."/>
            <person name="Hashimoto R."/>
            <person name="Hayashi T."/>
            <person name="Abe M."/>
            <person name="Yamazaki M."/>
            <person name="Nakao K."/>
            <person name="Nishioka T."/>
            <person name="Sakimura K."/>
            <person name="Yamada K."/>
            <person name="Kaibuchi K."/>
            <person name="Hoshino M."/>
        </authorList>
    </citation>
    <scope>IDENTIFICATION IN A COMPLEX WITH AUTS2 AND ELMO2</scope>
</reference>
<proteinExistence type="evidence at protein level"/>
<organism>
    <name type="scientific">Mus musculus</name>
    <name type="common">Mouse</name>
    <dbReference type="NCBI Taxonomy" id="10090"/>
    <lineage>
        <taxon>Eukaryota</taxon>
        <taxon>Metazoa</taxon>
        <taxon>Chordata</taxon>
        <taxon>Craniata</taxon>
        <taxon>Vertebrata</taxon>
        <taxon>Euteleostomi</taxon>
        <taxon>Mammalia</taxon>
        <taxon>Eutheria</taxon>
        <taxon>Euarchontoglires</taxon>
        <taxon>Glires</taxon>
        <taxon>Rodentia</taxon>
        <taxon>Myomorpha</taxon>
        <taxon>Muroidea</taxon>
        <taxon>Muridae</taxon>
        <taxon>Murinae</taxon>
        <taxon>Mus</taxon>
        <taxon>Mus</taxon>
    </lineage>
</organism>
<dbReference type="EMBL" id="AC100208">
    <property type="status" value="NOT_ANNOTATED_CDS"/>
    <property type="molecule type" value="Genomic_DNA"/>
</dbReference>
<dbReference type="EMBL" id="AC127574">
    <property type="status" value="NOT_ANNOTATED_CDS"/>
    <property type="molecule type" value="Genomic_DNA"/>
</dbReference>
<dbReference type="EMBL" id="AC129300">
    <property type="status" value="NOT_ANNOTATED_CDS"/>
    <property type="molecule type" value="Genomic_DNA"/>
</dbReference>
<dbReference type="EMBL" id="AC136515">
    <property type="status" value="NOT_ANNOTATED_CDS"/>
    <property type="molecule type" value="Genomic_DNA"/>
</dbReference>
<dbReference type="EMBL" id="AC136641">
    <property type="status" value="NOT_ANNOTATED_CDS"/>
    <property type="molecule type" value="Genomic_DNA"/>
</dbReference>
<dbReference type="EMBL" id="AK078899">
    <property type="protein sequence ID" value="BAC37448.1"/>
    <property type="molecule type" value="mRNA"/>
</dbReference>
<dbReference type="EMBL" id="AK082835">
    <property type="protein sequence ID" value="BAC38645.1"/>
    <property type="molecule type" value="mRNA"/>
</dbReference>
<dbReference type="EMBL" id="AK134905">
    <property type="protein sequence ID" value="BAE22333.1"/>
    <property type="molecule type" value="mRNA"/>
</dbReference>
<dbReference type="EMBL" id="AK141224">
    <property type="protein sequence ID" value="BAE24599.1"/>
    <property type="molecule type" value="mRNA"/>
</dbReference>
<dbReference type="EMBL" id="BC006755">
    <property type="protein sequence ID" value="AAH06755.1"/>
    <property type="molecule type" value="mRNA"/>
</dbReference>
<dbReference type="EMBL" id="BC009668">
    <property type="protein sequence ID" value="AAH09668.1"/>
    <property type="molecule type" value="mRNA"/>
</dbReference>
<dbReference type="EMBL" id="BC058998">
    <property type="protein sequence ID" value="AAH58998.1"/>
    <property type="molecule type" value="mRNA"/>
</dbReference>
<dbReference type="EMBL" id="BC098214">
    <property type="protein sequence ID" value="AAH98214.1"/>
    <property type="molecule type" value="mRNA"/>
</dbReference>
<dbReference type="CCDS" id="CCDS40166.1">
    <molecule id="Q8BUR4-1"/>
</dbReference>
<dbReference type="RefSeq" id="NP_001028592.1">
    <molecule id="Q8BUR4-1"/>
    <property type="nucleotide sequence ID" value="NM_001033420.2"/>
</dbReference>
<dbReference type="PDB" id="2M0Y">
    <property type="method" value="NMR"/>
    <property type="chains" value="A=1-74"/>
</dbReference>
<dbReference type="PDBsum" id="2M0Y"/>
<dbReference type="BMRB" id="Q8BUR4"/>
<dbReference type="SMR" id="Q8BUR4"/>
<dbReference type="BioGRID" id="237004">
    <property type="interactions" value="27"/>
</dbReference>
<dbReference type="FunCoup" id="Q8BUR4">
    <property type="interactions" value="1777"/>
</dbReference>
<dbReference type="IntAct" id="Q8BUR4">
    <property type="interactions" value="6"/>
</dbReference>
<dbReference type="STRING" id="10090.ENSMUSP00000081531"/>
<dbReference type="GlyGen" id="Q8BUR4">
    <property type="glycosylation" value="5 sites, 1 N-linked glycan (1 site)"/>
</dbReference>
<dbReference type="iPTMnet" id="Q8BUR4"/>
<dbReference type="PhosphoSitePlus" id="Q8BUR4"/>
<dbReference type="jPOST" id="Q8BUR4"/>
<dbReference type="PaxDb" id="10090-ENSMUSP00000081531"/>
<dbReference type="PeptideAtlas" id="Q8BUR4"/>
<dbReference type="ProteomicsDB" id="279796">
    <molecule id="Q8BUR4-1"/>
</dbReference>
<dbReference type="ProteomicsDB" id="279797">
    <molecule id="Q8BUR4-2"/>
</dbReference>
<dbReference type="Pumba" id="Q8BUR4"/>
<dbReference type="Antibodypedia" id="3822">
    <property type="antibodies" value="277 antibodies from 40 providers"/>
</dbReference>
<dbReference type="Ensembl" id="ENSMUST00000084488.5">
    <molecule id="Q8BUR4-1"/>
    <property type="protein sequence ID" value="ENSMUSP00000081531.5"/>
    <property type="gene ID" value="ENSMUSG00000058325.7"/>
</dbReference>
<dbReference type="GeneID" id="330662"/>
<dbReference type="KEGG" id="mmu:330662"/>
<dbReference type="UCSC" id="uc009kdu.1">
    <molecule id="Q8BUR4-2"/>
    <property type="organism name" value="mouse"/>
</dbReference>
<dbReference type="UCSC" id="uc009kdv.1">
    <molecule id="Q8BUR4-1"/>
    <property type="organism name" value="mouse"/>
</dbReference>
<dbReference type="AGR" id="MGI:2429765"/>
<dbReference type="CTD" id="1793"/>
<dbReference type="MGI" id="MGI:2429765">
    <property type="gene designation" value="Dock1"/>
</dbReference>
<dbReference type="VEuPathDB" id="HostDB:ENSMUSG00000058325"/>
<dbReference type="eggNOG" id="KOG1998">
    <property type="taxonomic scope" value="Eukaryota"/>
</dbReference>
<dbReference type="GeneTree" id="ENSGT00940000154974"/>
<dbReference type="HOGENOM" id="CLU_000595_2_1_1"/>
<dbReference type="InParanoid" id="Q8BUR4"/>
<dbReference type="OMA" id="LWDNQAF"/>
<dbReference type="OrthoDB" id="18896at2759"/>
<dbReference type="PhylomeDB" id="Q8BUR4"/>
<dbReference type="TreeFam" id="TF300423"/>
<dbReference type="Reactome" id="R-MMU-2029482">
    <property type="pathway name" value="Regulation of actin dynamics for phagocytic cup formation"/>
</dbReference>
<dbReference type="Reactome" id="R-MMU-418885">
    <property type="pathway name" value="DCC mediated attractive signaling"/>
</dbReference>
<dbReference type="Reactome" id="R-MMU-4420097">
    <property type="pathway name" value="VEGFA-VEGFR2 Pathway"/>
</dbReference>
<dbReference type="Reactome" id="R-MMU-8849471">
    <property type="pathway name" value="PTK6 Regulates RHO GTPases, RAS GTPase and MAP kinases"/>
</dbReference>
<dbReference type="Reactome" id="R-MMU-9013149">
    <property type="pathway name" value="RAC1 GTPase cycle"/>
</dbReference>
<dbReference type="Reactome" id="R-MMU-9013404">
    <property type="pathway name" value="RAC2 GTPase cycle"/>
</dbReference>
<dbReference type="Reactome" id="R-MMU-9013408">
    <property type="pathway name" value="RHOG GTPase cycle"/>
</dbReference>
<dbReference type="Reactome" id="R-MMU-983231">
    <property type="pathway name" value="Factors involved in megakaryocyte development and platelet production"/>
</dbReference>
<dbReference type="BioGRID-ORCS" id="330662">
    <property type="hits" value="3 hits in 78 CRISPR screens"/>
</dbReference>
<dbReference type="CD-CODE" id="CE726F99">
    <property type="entry name" value="Postsynaptic density"/>
</dbReference>
<dbReference type="ChiTaRS" id="Dock1">
    <property type="organism name" value="mouse"/>
</dbReference>
<dbReference type="EvolutionaryTrace" id="Q8BUR4"/>
<dbReference type="PRO" id="PR:Q8BUR4"/>
<dbReference type="Proteomes" id="UP000000589">
    <property type="component" value="Chromosome 7"/>
</dbReference>
<dbReference type="RNAct" id="Q8BUR4">
    <property type="molecule type" value="protein"/>
</dbReference>
<dbReference type="Bgee" id="ENSMUSG00000058325">
    <property type="expression patterns" value="Expressed in dorsal pancreas and 248 other cell types or tissues"/>
</dbReference>
<dbReference type="ExpressionAtlas" id="Q8BUR4">
    <property type="expression patterns" value="baseline and differential"/>
</dbReference>
<dbReference type="GO" id="GO:0005737">
    <property type="term" value="C:cytoplasm"/>
    <property type="evidence" value="ECO:0007669"/>
    <property type="project" value="UniProtKB-SubCell"/>
</dbReference>
<dbReference type="GO" id="GO:0016020">
    <property type="term" value="C:membrane"/>
    <property type="evidence" value="ECO:0007669"/>
    <property type="project" value="UniProtKB-SubCell"/>
</dbReference>
<dbReference type="GO" id="GO:0005085">
    <property type="term" value="F:guanyl-nucleotide exchange factor activity"/>
    <property type="evidence" value="ECO:0007669"/>
    <property type="project" value="UniProtKB-KW"/>
</dbReference>
<dbReference type="GO" id="GO:0017124">
    <property type="term" value="F:SH3 domain binding"/>
    <property type="evidence" value="ECO:0007669"/>
    <property type="project" value="UniProtKB-KW"/>
</dbReference>
<dbReference type="GO" id="GO:0006915">
    <property type="term" value="P:apoptotic process"/>
    <property type="evidence" value="ECO:0007669"/>
    <property type="project" value="UniProtKB-KW"/>
</dbReference>
<dbReference type="GO" id="GO:0016477">
    <property type="term" value="P:cell migration"/>
    <property type="evidence" value="ECO:0000314"/>
    <property type="project" value="MGI"/>
</dbReference>
<dbReference type="GO" id="GO:0002244">
    <property type="term" value="P:hematopoietic progenitor cell differentiation"/>
    <property type="evidence" value="ECO:0000316"/>
    <property type="project" value="MGI"/>
</dbReference>
<dbReference type="GO" id="GO:0006909">
    <property type="term" value="P:phagocytosis"/>
    <property type="evidence" value="ECO:0007669"/>
    <property type="project" value="UniProtKB-KW"/>
</dbReference>
<dbReference type="GO" id="GO:0010634">
    <property type="term" value="P:positive regulation of epithelial cell migration"/>
    <property type="evidence" value="ECO:0000250"/>
    <property type="project" value="UniProtKB"/>
</dbReference>
<dbReference type="GO" id="GO:1900026">
    <property type="term" value="P:positive regulation of substrate adhesion-dependent cell spreading"/>
    <property type="evidence" value="ECO:0000250"/>
    <property type="project" value="UniProtKB"/>
</dbReference>
<dbReference type="GO" id="GO:0007264">
    <property type="term" value="P:small GTPase-mediated signal transduction"/>
    <property type="evidence" value="ECO:0007669"/>
    <property type="project" value="InterPro"/>
</dbReference>
<dbReference type="CDD" id="cd08694">
    <property type="entry name" value="C2_Dock-A"/>
    <property type="match status" value="1"/>
</dbReference>
<dbReference type="CDD" id="cd12051">
    <property type="entry name" value="SH3_DOCK1_5_A"/>
    <property type="match status" value="1"/>
</dbReference>
<dbReference type="FunFam" id="1.20.58.740:FF:000004">
    <property type="entry name" value="Dedicator of cytokinesis protein 1"/>
    <property type="match status" value="1"/>
</dbReference>
<dbReference type="FunFam" id="1.25.40.410:FF:000004">
    <property type="entry name" value="Dedicator of cytokinesis protein 1"/>
    <property type="match status" value="1"/>
</dbReference>
<dbReference type="FunFam" id="2.60.40.150:FF:000044">
    <property type="entry name" value="dedicator of cytokinesis protein 1"/>
    <property type="match status" value="1"/>
</dbReference>
<dbReference type="FunFam" id="2.30.30.40:FF:000057">
    <property type="entry name" value="Dedicator of cytokinesis protein 4"/>
    <property type="match status" value="1"/>
</dbReference>
<dbReference type="FunFam" id="1.20.1270.350:FF:000001">
    <property type="entry name" value="dedicator of cytokinesis protein 4"/>
    <property type="match status" value="1"/>
</dbReference>
<dbReference type="Gene3D" id="1.20.58.740">
    <property type="match status" value="1"/>
</dbReference>
<dbReference type="Gene3D" id="1.25.40.410">
    <property type="match status" value="1"/>
</dbReference>
<dbReference type="Gene3D" id="2.60.40.150">
    <property type="entry name" value="C2 domain"/>
    <property type="match status" value="1"/>
</dbReference>
<dbReference type="Gene3D" id="1.20.1270.350">
    <property type="entry name" value="Dedicator of cytokinesis N-terminal subdomain"/>
    <property type="match status" value="1"/>
</dbReference>
<dbReference type="Gene3D" id="2.30.30.40">
    <property type="entry name" value="SH3 Domains"/>
    <property type="match status" value="1"/>
</dbReference>
<dbReference type="InterPro" id="IPR016024">
    <property type="entry name" value="ARM-type_fold"/>
</dbReference>
<dbReference type="InterPro" id="IPR027007">
    <property type="entry name" value="C2_DOCK-type_domain"/>
</dbReference>
<dbReference type="InterPro" id="IPR035892">
    <property type="entry name" value="C2_domain_sf"/>
</dbReference>
<dbReference type="InterPro" id="IPR026791">
    <property type="entry name" value="DOCK"/>
</dbReference>
<dbReference type="InterPro" id="IPR047025">
    <property type="entry name" value="DOCK1_5_SH3"/>
</dbReference>
<dbReference type="InterPro" id="IPR047026">
    <property type="entry name" value="DOCK1_C2"/>
</dbReference>
<dbReference type="InterPro" id="IPR043161">
    <property type="entry name" value="DOCK_C_lobe_A"/>
</dbReference>
<dbReference type="InterPro" id="IPR043162">
    <property type="entry name" value="DOCK_C_lobe_C"/>
</dbReference>
<dbReference type="InterPro" id="IPR032376">
    <property type="entry name" value="DOCK_N"/>
</dbReference>
<dbReference type="InterPro" id="IPR042455">
    <property type="entry name" value="DOCK_N_sub1"/>
</dbReference>
<dbReference type="InterPro" id="IPR027357">
    <property type="entry name" value="DOCKER_dom"/>
</dbReference>
<dbReference type="InterPro" id="IPR046769">
    <property type="entry name" value="DOCKER_Lobe_A"/>
</dbReference>
<dbReference type="InterPro" id="IPR046770">
    <property type="entry name" value="DOCKER_Lobe_B"/>
</dbReference>
<dbReference type="InterPro" id="IPR046773">
    <property type="entry name" value="DOCKER_Lobe_C"/>
</dbReference>
<dbReference type="InterPro" id="IPR036028">
    <property type="entry name" value="SH3-like_dom_sf"/>
</dbReference>
<dbReference type="InterPro" id="IPR001452">
    <property type="entry name" value="SH3_domain"/>
</dbReference>
<dbReference type="InterPro" id="IPR056372">
    <property type="entry name" value="TPR_DOCK"/>
</dbReference>
<dbReference type="PANTHER" id="PTHR45653">
    <property type="entry name" value="DEDICATOR OF CYTOKINESIS"/>
    <property type="match status" value="1"/>
</dbReference>
<dbReference type="PANTHER" id="PTHR45653:SF1">
    <property type="entry name" value="DEDICATOR OF CYTOKINESIS PROTEIN 1"/>
    <property type="match status" value="1"/>
</dbReference>
<dbReference type="Pfam" id="PF06920">
    <property type="entry name" value="DHR-2_Lobe_A"/>
    <property type="match status" value="1"/>
</dbReference>
<dbReference type="Pfam" id="PF20422">
    <property type="entry name" value="DHR-2_Lobe_B"/>
    <property type="match status" value="1"/>
</dbReference>
<dbReference type="Pfam" id="PF20421">
    <property type="entry name" value="DHR-2_Lobe_C"/>
    <property type="match status" value="1"/>
</dbReference>
<dbReference type="Pfam" id="PF14429">
    <property type="entry name" value="DOCK-C2"/>
    <property type="match status" value="1"/>
</dbReference>
<dbReference type="Pfam" id="PF16172">
    <property type="entry name" value="DOCK_N"/>
    <property type="match status" value="1"/>
</dbReference>
<dbReference type="Pfam" id="PF00018">
    <property type="entry name" value="SH3_1"/>
    <property type="match status" value="1"/>
</dbReference>
<dbReference type="Pfam" id="PF23554">
    <property type="entry name" value="TPR_DOCK"/>
    <property type="match status" value="1"/>
</dbReference>
<dbReference type="SMART" id="SM00326">
    <property type="entry name" value="SH3"/>
    <property type="match status" value="1"/>
</dbReference>
<dbReference type="SUPFAM" id="SSF48371">
    <property type="entry name" value="ARM repeat"/>
    <property type="match status" value="1"/>
</dbReference>
<dbReference type="SUPFAM" id="SSF50044">
    <property type="entry name" value="SH3-domain"/>
    <property type="match status" value="1"/>
</dbReference>
<dbReference type="PROSITE" id="PS51650">
    <property type="entry name" value="C2_DOCK"/>
    <property type="match status" value="1"/>
</dbReference>
<dbReference type="PROSITE" id="PS51651">
    <property type="entry name" value="DOCKER"/>
    <property type="match status" value="1"/>
</dbReference>
<dbReference type="PROSITE" id="PS50002">
    <property type="entry name" value="SH3"/>
    <property type="match status" value="1"/>
</dbReference>
<name>DOCK1_MOUSE</name>
<comment type="function">
    <text evidence="2">Involved in cytoskeletal rearrangements required for phagocytosis of apoptotic cells and cell motility. Along with DOCK1, mediates CRK/CRKL regulation of epithelial and endothelial cell spreading and migration on type IV collagen. Functions as a guanine nucleotide exchange factor (GEF), which activates Rac Rho small GTPases by exchanging bound GDP for free GTP. Its GEF activity may be enhanced by ELMO1.</text>
</comment>
<comment type="subunit">
    <text evidence="2 8 9">Interacts with the SH3 domains of CRK and NCK2 via multiple sites. Interacts with nucleotide-free RAC1 via its DOCKER domain. Interacts with ELMO1, ELMO2 and probably ELMO3 via its SH3 domain. Interacts with RAC1 (By similarity). Interacts with ELMO1 and ADGRB1 (PubMed:17960134). Identified in a complex with AUTS2 and ELMO2 (PubMed:25533347).</text>
</comment>
<comment type="interaction">
    <interactant intactId="EBI-646023">
        <id>Q8BUR4</id>
    </interactant>
    <interactant intactId="EBI-644162">
        <id>Q8BPU7-1</id>
        <label>Elmo1</label>
    </interactant>
    <organismsDiffer>false</organismsDiffer>
    <experiments>13</experiments>
</comment>
<comment type="interaction">
    <interactant intactId="EBI-646023">
        <id>Q8BUR4</id>
    </interactant>
    <interactant intactId="EBI-646035">
        <id>Q8BYZ7</id>
        <label>Elmo3</label>
    </interactant>
    <organismsDiffer>false</organismsDiffer>
    <experiments>4</experiments>
</comment>
<comment type="interaction">
    <interactant intactId="EBI-646023">
        <id>Q8BUR4</id>
    </interactant>
    <interactant intactId="EBI-646042">
        <id>Q8C0C0</id>
        <label>Zhx2</label>
    </interactant>
    <organismsDiffer>false</organismsDiffer>
    <experiments>3</experiments>
</comment>
<comment type="subcellular location">
    <subcellularLocation>
        <location evidence="1">Cytoplasm</location>
    </subcellularLocation>
    <subcellularLocation>
        <location evidence="1">Membrane</location>
    </subcellularLocation>
    <text evidence="1">Recruited to membranes via its interaction with phosphatidylinositol 3,4,5-trisphosphate.</text>
</comment>
<comment type="alternative products">
    <event type="alternative splicing"/>
    <isoform>
        <id>Q8BUR4-1</id>
        <name>1</name>
        <sequence type="displayed"/>
    </isoform>
    <isoform>
        <id>Q8BUR4-2</id>
        <name>2</name>
        <sequence type="described" ref="VSP_022205 VSP_022206"/>
    </isoform>
</comment>
<comment type="domain">
    <text>The DOCKER domain is necessary and sufficient for the GEF activity.</text>
</comment>
<comment type="similarity">
    <text evidence="5">Belongs to the DOCK family.</text>
</comment>
<gene>
    <name type="primary">Dock1</name>
</gene>